<keyword id="KW-0472">Membrane</keyword>
<keyword id="KW-1185">Reference proteome</keyword>
<keyword id="KW-0812">Transmembrane</keyword>
<keyword id="KW-1133">Transmembrane helix</keyword>
<proteinExistence type="evidence at transcript level"/>
<gene>
    <name evidence="3" type="primary">Tmem267</name>
    <name type="synonym">Gm7120</name>
</gene>
<protein>
    <recommendedName>
        <fullName evidence="3">Transmembrane protein 267</fullName>
    </recommendedName>
</protein>
<dbReference type="EMBL" id="AK050607">
    <property type="protein sequence ID" value="BAC34338.1"/>
    <property type="molecule type" value="mRNA"/>
</dbReference>
<dbReference type="EMBL" id="BC021422">
    <property type="protein sequence ID" value="AAH21422.1"/>
    <property type="molecule type" value="mRNA"/>
</dbReference>
<dbReference type="EMBL" id="BC103784">
    <property type="protein sequence ID" value="AAI03785.1"/>
    <property type="molecule type" value="mRNA"/>
</dbReference>
<dbReference type="CCDS" id="CCDS56899.1"/>
<dbReference type="RefSeq" id="NP_001034333.3">
    <property type="nucleotide sequence ID" value="NM_001039244.4"/>
</dbReference>
<dbReference type="RefSeq" id="NP_001171137.2">
    <property type="nucleotide sequence ID" value="NM_001177666.3"/>
</dbReference>
<dbReference type="RefSeq" id="NP_001357555.1">
    <property type="nucleotide sequence ID" value="NM_001370626.1"/>
</dbReference>
<dbReference type="RefSeq" id="NP_001357556.1">
    <property type="nucleotide sequence ID" value="NM_001370627.1"/>
</dbReference>
<dbReference type="FunCoup" id="Q8VDR5">
    <property type="interactions" value="50"/>
</dbReference>
<dbReference type="STRING" id="10090.ENSMUSP00000096751"/>
<dbReference type="SwissPalm" id="Q8VDR5"/>
<dbReference type="PaxDb" id="10090-ENSMUSP00000135685"/>
<dbReference type="ProteomicsDB" id="259108"/>
<dbReference type="Pumba" id="Q8VDR5"/>
<dbReference type="GeneID" id="633640"/>
<dbReference type="KEGG" id="mmu:633640"/>
<dbReference type="AGR" id="MGI:3648543"/>
<dbReference type="CTD" id="64417"/>
<dbReference type="MGI" id="MGI:3648543">
    <property type="gene designation" value="Tmem267"/>
</dbReference>
<dbReference type="eggNOG" id="ENOG502QQ1U">
    <property type="taxonomic scope" value="Eukaryota"/>
</dbReference>
<dbReference type="InParanoid" id="Q8VDR5"/>
<dbReference type="OrthoDB" id="10014558at2759"/>
<dbReference type="PhylomeDB" id="Q8VDR5"/>
<dbReference type="BioGRID-ORCS" id="633640">
    <property type="hits" value="4 hits in 21 CRISPR screens"/>
</dbReference>
<dbReference type="ChiTaRS" id="Tmem267">
    <property type="organism name" value="mouse"/>
</dbReference>
<dbReference type="PRO" id="PR:Q8VDR5"/>
<dbReference type="Proteomes" id="UP000000589">
    <property type="component" value="Unplaced"/>
</dbReference>
<dbReference type="RNAct" id="Q8VDR5">
    <property type="molecule type" value="protein"/>
</dbReference>
<dbReference type="GO" id="GO:0016020">
    <property type="term" value="C:membrane"/>
    <property type="evidence" value="ECO:0007669"/>
    <property type="project" value="UniProtKB-SubCell"/>
</dbReference>
<dbReference type="InterPro" id="IPR026572">
    <property type="entry name" value="TMEM267"/>
</dbReference>
<dbReference type="PANTHER" id="PTHR13628">
    <property type="entry name" value="TRANSMEMBRANE PROTEIN 267"/>
    <property type="match status" value="1"/>
</dbReference>
<dbReference type="PANTHER" id="PTHR13628:SF1">
    <property type="entry name" value="TRANSMEMBRANE PROTEIN 267"/>
    <property type="match status" value="1"/>
</dbReference>
<feature type="chain" id="PRO_0000281922" description="Transmembrane protein 267">
    <location>
        <begin position="1"/>
        <end position="215"/>
    </location>
</feature>
<feature type="transmembrane region" description="Helical" evidence="1">
    <location>
        <begin position="77"/>
        <end position="97"/>
    </location>
</feature>
<feature type="transmembrane region" description="Helical" evidence="1">
    <location>
        <begin position="114"/>
        <end position="134"/>
    </location>
</feature>
<feature type="transmembrane region" description="Helical" evidence="1">
    <location>
        <begin position="178"/>
        <end position="198"/>
    </location>
</feature>
<feature type="sequence conflict" description="In Ref. 2; AAI03785." evidence="2" ref="2">
    <original>L</original>
    <variation>F</variation>
    <location>
        <position position="36"/>
    </location>
</feature>
<organism>
    <name type="scientific">Mus musculus</name>
    <name type="common">Mouse</name>
    <dbReference type="NCBI Taxonomy" id="10090"/>
    <lineage>
        <taxon>Eukaryota</taxon>
        <taxon>Metazoa</taxon>
        <taxon>Chordata</taxon>
        <taxon>Craniata</taxon>
        <taxon>Vertebrata</taxon>
        <taxon>Euteleostomi</taxon>
        <taxon>Mammalia</taxon>
        <taxon>Eutheria</taxon>
        <taxon>Euarchontoglires</taxon>
        <taxon>Glires</taxon>
        <taxon>Rodentia</taxon>
        <taxon>Myomorpha</taxon>
        <taxon>Muroidea</taxon>
        <taxon>Muridae</taxon>
        <taxon>Murinae</taxon>
        <taxon>Mus</taxon>
        <taxon>Mus</taxon>
    </lineage>
</organism>
<accession>Q8VDR5</accession>
<accession>Q3SYJ5</accession>
<name>TM267_MOUSE</name>
<comment type="subcellular location">
    <subcellularLocation>
        <location evidence="2">Membrane</location>
        <topology evidence="2">Multi-pass membrane protein</topology>
    </subcellularLocation>
</comment>
<evidence type="ECO:0000255" key="1"/>
<evidence type="ECO:0000305" key="2"/>
<evidence type="ECO:0000312" key="3">
    <source>
        <dbReference type="MGI" id="MGI:3648543"/>
    </source>
</evidence>
<sequence>MASKVEKTHALPPCCSTESLISSIGLGIFCLVADRLLRFPIIQHNDWLRAISDNIVHGVIGMWSWAVVTGIRKKSDFGEVLLAGFLASVIDVDHFFQARSLSLQAALTLPRRPFLHCSTVIPIAVLSVKLAVHLFKLRDSWRFLPWMILVSWTSHHIRDGIRHGLWICPFGKTPPLPSSFYVISTLSLPHLCSFLMYLTGTRQTVSSKYGMRIDV</sequence>
<reference key="1">
    <citation type="journal article" date="2005" name="Science">
        <title>The transcriptional landscape of the mammalian genome.</title>
        <authorList>
            <person name="Carninci P."/>
            <person name="Kasukawa T."/>
            <person name="Katayama S."/>
            <person name="Gough J."/>
            <person name="Frith M.C."/>
            <person name="Maeda N."/>
            <person name="Oyama R."/>
            <person name="Ravasi T."/>
            <person name="Lenhard B."/>
            <person name="Wells C."/>
            <person name="Kodzius R."/>
            <person name="Shimokawa K."/>
            <person name="Bajic V.B."/>
            <person name="Brenner S.E."/>
            <person name="Batalov S."/>
            <person name="Forrest A.R."/>
            <person name="Zavolan M."/>
            <person name="Davis M.J."/>
            <person name="Wilming L.G."/>
            <person name="Aidinis V."/>
            <person name="Allen J.E."/>
            <person name="Ambesi-Impiombato A."/>
            <person name="Apweiler R."/>
            <person name="Aturaliya R.N."/>
            <person name="Bailey T.L."/>
            <person name="Bansal M."/>
            <person name="Baxter L."/>
            <person name="Beisel K.W."/>
            <person name="Bersano T."/>
            <person name="Bono H."/>
            <person name="Chalk A.M."/>
            <person name="Chiu K.P."/>
            <person name="Choudhary V."/>
            <person name="Christoffels A."/>
            <person name="Clutterbuck D.R."/>
            <person name="Crowe M.L."/>
            <person name="Dalla E."/>
            <person name="Dalrymple B.P."/>
            <person name="de Bono B."/>
            <person name="Della Gatta G."/>
            <person name="di Bernardo D."/>
            <person name="Down T."/>
            <person name="Engstrom P."/>
            <person name="Fagiolini M."/>
            <person name="Faulkner G."/>
            <person name="Fletcher C.F."/>
            <person name="Fukushima T."/>
            <person name="Furuno M."/>
            <person name="Futaki S."/>
            <person name="Gariboldi M."/>
            <person name="Georgii-Hemming P."/>
            <person name="Gingeras T.R."/>
            <person name="Gojobori T."/>
            <person name="Green R.E."/>
            <person name="Gustincich S."/>
            <person name="Harbers M."/>
            <person name="Hayashi Y."/>
            <person name="Hensch T.K."/>
            <person name="Hirokawa N."/>
            <person name="Hill D."/>
            <person name="Huminiecki L."/>
            <person name="Iacono M."/>
            <person name="Ikeo K."/>
            <person name="Iwama A."/>
            <person name="Ishikawa T."/>
            <person name="Jakt M."/>
            <person name="Kanapin A."/>
            <person name="Katoh M."/>
            <person name="Kawasawa Y."/>
            <person name="Kelso J."/>
            <person name="Kitamura H."/>
            <person name="Kitano H."/>
            <person name="Kollias G."/>
            <person name="Krishnan S.P."/>
            <person name="Kruger A."/>
            <person name="Kummerfeld S.K."/>
            <person name="Kurochkin I.V."/>
            <person name="Lareau L.F."/>
            <person name="Lazarevic D."/>
            <person name="Lipovich L."/>
            <person name="Liu J."/>
            <person name="Liuni S."/>
            <person name="McWilliam S."/>
            <person name="Madan Babu M."/>
            <person name="Madera M."/>
            <person name="Marchionni L."/>
            <person name="Matsuda H."/>
            <person name="Matsuzawa S."/>
            <person name="Miki H."/>
            <person name="Mignone F."/>
            <person name="Miyake S."/>
            <person name="Morris K."/>
            <person name="Mottagui-Tabar S."/>
            <person name="Mulder N."/>
            <person name="Nakano N."/>
            <person name="Nakauchi H."/>
            <person name="Ng P."/>
            <person name="Nilsson R."/>
            <person name="Nishiguchi S."/>
            <person name="Nishikawa S."/>
            <person name="Nori F."/>
            <person name="Ohara O."/>
            <person name="Okazaki Y."/>
            <person name="Orlando V."/>
            <person name="Pang K.C."/>
            <person name="Pavan W.J."/>
            <person name="Pavesi G."/>
            <person name="Pesole G."/>
            <person name="Petrovsky N."/>
            <person name="Piazza S."/>
            <person name="Reed J."/>
            <person name="Reid J.F."/>
            <person name="Ring B.Z."/>
            <person name="Ringwald M."/>
            <person name="Rost B."/>
            <person name="Ruan Y."/>
            <person name="Salzberg S.L."/>
            <person name="Sandelin A."/>
            <person name="Schneider C."/>
            <person name="Schoenbach C."/>
            <person name="Sekiguchi K."/>
            <person name="Semple C.A."/>
            <person name="Seno S."/>
            <person name="Sessa L."/>
            <person name="Sheng Y."/>
            <person name="Shibata Y."/>
            <person name="Shimada H."/>
            <person name="Shimada K."/>
            <person name="Silva D."/>
            <person name="Sinclair B."/>
            <person name="Sperling S."/>
            <person name="Stupka E."/>
            <person name="Sugiura K."/>
            <person name="Sultana R."/>
            <person name="Takenaka Y."/>
            <person name="Taki K."/>
            <person name="Tammoja K."/>
            <person name="Tan S.L."/>
            <person name="Tang S."/>
            <person name="Taylor M.S."/>
            <person name="Tegner J."/>
            <person name="Teichmann S.A."/>
            <person name="Ueda H.R."/>
            <person name="van Nimwegen E."/>
            <person name="Verardo R."/>
            <person name="Wei C.L."/>
            <person name="Yagi K."/>
            <person name="Yamanishi H."/>
            <person name="Zabarovsky E."/>
            <person name="Zhu S."/>
            <person name="Zimmer A."/>
            <person name="Hide W."/>
            <person name="Bult C."/>
            <person name="Grimmond S.M."/>
            <person name="Teasdale R.D."/>
            <person name="Liu E.T."/>
            <person name="Brusic V."/>
            <person name="Quackenbush J."/>
            <person name="Wahlestedt C."/>
            <person name="Mattick J.S."/>
            <person name="Hume D.A."/>
            <person name="Kai C."/>
            <person name="Sasaki D."/>
            <person name="Tomaru Y."/>
            <person name="Fukuda S."/>
            <person name="Kanamori-Katayama M."/>
            <person name="Suzuki M."/>
            <person name="Aoki J."/>
            <person name="Arakawa T."/>
            <person name="Iida J."/>
            <person name="Imamura K."/>
            <person name="Itoh M."/>
            <person name="Kato T."/>
            <person name="Kawaji H."/>
            <person name="Kawagashira N."/>
            <person name="Kawashima T."/>
            <person name="Kojima M."/>
            <person name="Kondo S."/>
            <person name="Konno H."/>
            <person name="Nakano K."/>
            <person name="Ninomiya N."/>
            <person name="Nishio T."/>
            <person name="Okada M."/>
            <person name="Plessy C."/>
            <person name="Shibata K."/>
            <person name="Shiraki T."/>
            <person name="Suzuki S."/>
            <person name="Tagami M."/>
            <person name="Waki K."/>
            <person name="Watahiki A."/>
            <person name="Okamura-Oho Y."/>
            <person name="Suzuki H."/>
            <person name="Kawai J."/>
            <person name="Hayashizaki Y."/>
        </authorList>
    </citation>
    <scope>NUCLEOTIDE SEQUENCE [LARGE SCALE MRNA]</scope>
    <source>
        <strain>C57BL/6J</strain>
        <tissue>Thymus</tissue>
    </source>
</reference>
<reference key="2">
    <citation type="journal article" date="2004" name="Genome Res.">
        <title>The status, quality, and expansion of the NIH full-length cDNA project: the Mammalian Gene Collection (MGC).</title>
        <authorList>
            <consortium name="The MGC Project Team"/>
        </authorList>
    </citation>
    <scope>NUCLEOTIDE SEQUENCE [LARGE SCALE MRNA]</scope>
    <source>
        <strain>FVB/N-3</strain>
        <tissue>Mammary tumor</tissue>
        <tissue>Olfactory epithelium</tissue>
    </source>
</reference>